<reference key="1">
    <citation type="journal article" date="1999" name="Nature">
        <title>Sequence and analysis of chromosome 4 of the plant Arabidopsis thaliana.</title>
        <authorList>
            <person name="Mayer K.F.X."/>
            <person name="Schueller C."/>
            <person name="Wambutt R."/>
            <person name="Murphy G."/>
            <person name="Volckaert G."/>
            <person name="Pohl T."/>
            <person name="Duesterhoeft A."/>
            <person name="Stiekema W."/>
            <person name="Entian K.-D."/>
            <person name="Terryn N."/>
            <person name="Harris B."/>
            <person name="Ansorge W."/>
            <person name="Brandt P."/>
            <person name="Grivell L.A."/>
            <person name="Rieger M."/>
            <person name="Weichselgartner M."/>
            <person name="de Simone V."/>
            <person name="Obermaier B."/>
            <person name="Mache R."/>
            <person name="Mueller M."/>
            <person name="Kreis M."/>
            <person name="Delseny M."/>
            <person name="Puigdomenech P."/>
            <person name="Watson M."/>
            <person name="Schmidtheini T."/>
            <person name="Reichert B."/>
            <person name="Portetelle D."/>
            <person name="Perez-Alonso M."/>
            <person name="Boutry M."/>
            <person name="Bancroft I."/>
            <person name="Vos P."/>
            <person name="Hoheisel J."/>
            <person name="Zimmermann W."/>
            <person name="Wedler H."/>
            <person name="Ridley P."/>
            <person name="Langham S.-A."/>
            <person name="McCullagh B."/>
            <person name="Bilham L."/>
            <person name="Robben J."/>
            <person name="van der Schueren J."/>
            <person name="Grymonprez B."/>
            <person name="Chuang Y.-J."/>
            <person name="Vandenbussche F."/>
            <person name="Braeken M."/>
            <person name="Weltjens I."/>
            <person name="Voet M."/>
            <person name="Bastiaens I."/>
            <person name="Aert R."/>
            <person name="Defoor E."/>
            <person name="Weitzenegger T."/>
            <person name="Bothe G."/>
            <person name="Ramsperger U."/>
            <person name="Hilbert H."/>
            <person name="Braun M."/>
            <person name="Holzer E."/>
            <person name="Brandt A."/>
            <person name="Peters S."/>
            <person name="van Staveren M."/>
            <person name="Dirkse W."/>
            <person name="Mooijman P."/>
            <person name="Klein Lankhorst R."/>
            <person name="Rose M."/>
            <person name="Hauf J."/>
            <person name="Koetter P."/>
            <person name="Berneiser S."/>
            <person name="Hempel S."/>
            <person name="Feldpausch M."/>
            <person name="Lamberth S."/>
            <person name="Van den Daele H."/>
            <person name="De Keyser A."/>
            <person name="Buysshaert C."/>
            <person name="Gielen J."/>
            <person name="Villarroel R."/>
            <person name="De Clercq R."/>
            <person name="van Montagu M."/>
            <person name="Rogers J."/>
            <person name="Cronin A."/>
            <person name="Quail M.A."/>
            <person name="Bray-Allen S."/>
            <person name="Clark L."/>
            <person name="Doggett J."/>
            <person name="Hall S."/>
            <person name="Kay M."/>
            <person name="Lennard N."/>
            <person name="McLay K."/>
            <person name="Mayes R."/>
            <person name="Pettett A."/>
            <person name="Rajandream M.A."/>
            <person name="Lyne M."/>
            <person name="Benes V."/>
            <person name="Rechmann S."/>
            <person name="Borkova D."/>
            <person name="Bloecker H."/>
            <person name="Scharfe M."/>
            <person name="Grimm M."/>
            <person name="Loehnert T.-H."/>
            <person name="Dose S."/>
            <person name="de Haan M."/>
            <person name="Maarse A.C."/>
            <person name="Schaefer M."/>
            <person name="Mueller-Auer S."/>
            <person name="Gabel C."/>
            <person name="Fuchs M."/>
            <person name="Fartmann B."/>
            <person name="Granderath K."/>
            <person name="Dauner D."/>
            <person name="Herzl A."/>
            <person name="Neumann S."/>
            <person name="Argiriou A."/>
            <person name="Vitale D."/>
            <person name="Liguori R."/>
            <person name="Piravandi E."/>
            <person name="Massenet O."/>
            <person name="Quigley F."/>
            <person name="Clabauld G."/>
            <person name="Muendlein A."/>
            <person name="Felber R."/>
            <person name="Schnabl S."/>
            <person name="Hiller R."/>
            <person name="Schmidt W."/>
            <person name="Lecharny A."/>
            <person name="Aubourg S."/>
            <person name="Chefdor F."/>
            <person name="Cooke R."/>
            <person name="Berger C."/>
            <person name="Monfort A."/>
            <person name="Casacuberta E."/>
            <person name="Gibbons T."/>
            <person name="Weber N."/>
            <person name="Vandenbol M."/>
            <person name="Bargues M."/>
            <person name="Terol J."/>
            <person name="Torres A."/>
            <person name="Perez-Perez A."/>
            <person name="Purnelle B."/>
            <person name="Bent E."/>
            <person name="Johnson S."/>
            <person name="Tacon D."/>
            <person name="Jesse T."/>
            <person name="Heijnen L."/>
            <person name="Schwarz S."/>
            <person name="Scholler P."/>
            <person name="Heber S."/>
            <person name="Francs P."/>
            <person name="Bielke C."/>
            <person name="Frishman D."/>
            <person name="Haase D."/>
            <person name="Lemcke K."/>
            <person name="Mewes H.-W."/>
            <person name="Stocker S."/>
            <person name="Zaccaria P."/>
            <person name="Bevan M."/>
            <person name="Wilson R.K."/>
            <person name="de la Bastide M."/>
            <person name="Habermann K."/>
            <person name="Parnell L."/>
            <person name="Dedhia N."/>
            <person name="Gnoj L."/>
            <person name="Schutz K."/>
            <person name="Huang E."/>
            <person name="Spiegel L."/>
            <person name="Sekhon M."/>
            <person name="Murray J."/>
            <person name="Sheet P."/>
            <person name="Cordes M."/>
            <person name="Abu-Threideh J."/>
            <person name="Stoneking T."/>
            <person name="Kalicki J."/>
            <person name="Graves T."/>
            <person name="Harmon G."/>
            <person name="Edwards J."/>
            <person name="Latreille P."/>
            <person name="Courtney L."/>
            <person name="Cloud J."/>
            <person name="Abbott A."/>
            <person name="Scott K."/>
            <person name="Johnson D."/>
            <person name="Minx P."/>
            <person name="Bentley D."/>
            <person name="Fulton B."/>
            <person name="Miller N."/>
            <person name="Greco T."/>
            <person name="Kemp K."/>
            <person name="Kramer J."/>
            <person name="Fulton L."/>
            <person name="Mardis E."/>
            <person name="Dante M."/>
            <person name="Pepin K."/>
            <person name="Hillier L.W."/>
            <person name="Nelson J."/>
            <person name="Spieth J."/>
            <person name="Ryan E."/>
            <person name="Andrews S."/>
            <person name="Geisel C."/>
            <person name="Layman D."/>
            <person name="Du H."/>
            <person name="Ali J."/>
            <person name="Berghoff A."/>
            <person name="Jones K."/>
            <person name="Drone K."/>
            <person name="Cotton M."/>
            <person name="Joshu C."/>
            <person name="Antonoiu B."/>
            <person name="Zidanic M."/>
            <person name="Strong C."/>
            <person name="Sun H."/>
            <person name="Lamar B."/>
            <person name="Yordan C."/>
            <person name="Ma P."/>
            <person name="Zhong J."/>
            <person name="Preston R."/>
            <person name="Vil D."/>
            <person name="Shekher M."/>
            <person name="Matero A."/>
            <person name="Shah R."/>
            <person name="Swaby I.K."/>
            <person name="O'Shaughnessy A."/>
            <person name="Rodriguez M."/>
            <person name="Hoffman J."/>
            <person name="Till S."/>
            <person name="Granat S."/>
            <person name="Shohdy N."/>
            <person name="Hasegawa A."/>
            <person name="Hameed A."/>
            <person name="Lodhi M."/>
            <person name="Johnson A."/>
            <person name="Chen E."/>
            <person name="Marra M.A."/>
            <person name="Martienssen R."/>
            <person name="McCombie W.R."/>
        </authorList>
    </citation>
    <scope>NUCLEOTIDE SEQUENCE [LARGE SCALE GENOMIC DNA]</scope>
    <source>
        <strain>cv. Columbia</strain>
    </source>
</reference>
<reference key="2">
    <citation type="journal article" date="2017" name="Plant J.">
        <title>Araport11: a complete reannotation of the Arabidopsis thaliana reference genome.</title>
        <authorList>
            <person name="Cheng C.Y."/>
            <person name="Krishnakumar V."/>
            <person name="Chan A.P."/>
            <person name="Thibaud-Nissen F."/>
            <person name="Schobel S."/>
            <person name="Town C.D."/>
        </authorList>
    </citation>
    <scope>GENOME REANNOTATION</scope>
    <source>
        <strain>cv. Columbia</strain>
    </source>
</reference>
<reference key="3">
    <citation type="journal article" date="2009" name="Mol. Plant">
        <title>Diverse transcriptional programs associated with environmental stress and hormones in the Arabidopsis receptor-like kinase gene family.</title>
        <authorList>
            <person name="Chae L."/>
            <person name="Sudat S."/>
            <person name="Dudoit S."/>
            <person name="Zhu T."/>
            <person name="Luan S."/>
        </authorList>
    </citation>
    <scope>GENE FAMILY</scope>
</reference>
<organism>
    <name type="scientific">Arabidopsis thaliana</name>
    <name type="common">Mouse-ear cress</name>
    <dbReference type="NCBI Taxonomy" id="3702"/>
    <lineage>
        <taxon>Eukaryota</taxon>
        <taxon>Viridiplantae</taxon>
        <taxon>Streptophyta</taxon>
        <taxon>Embryophyta</taxon>
        <taxon>Tracheophyta</taxon>
        <taxon>Spermatophyta</taxon>
        <taxon>Magnoliopsida</taxon>
        <taxon>eudicotyledons</taxon>
        <taxon>Gunneridae</taxon>
        <taxon>Pentapetalae</taxon>
        <taxon>rosids</taxon>
        <taxon>malvids</taxon>
        <taxon>Brassicales</taxon>
        <taxon>Brassicaceae</taxon>
        <taxon>Camelineae</taxon>
        <taxon>Arabidopsis</taxon>
    </lineage>
</organism>
<sequence length="878" mass="96505">MEIRKKPNIFTVLVIDFSSKPSMALLLAILLFLSGPSASAVAAAAVGPATGFKPADDILIDCGSKSSSKTPDGRVFKSDQETIQYIEAKEDIQVSAPPSDKVASPIYLTARIFREEATYKFHLTRPGWHWVRLHFLAFPNDKFDLQQATFSVLTEKYVLLHNFKISNNNNDSQAAVQKEYLVNMTDAQFALRFRPMKSSAAFINAIEVVSAPDELISDSGTALFPVIGFSGLSDYAYQSVYRVNVGGPLIMPQNDTLGRTWIPDKEFLKDENLAKDVKTTPSAIKYPPEVTPLIAPQTVYATAVEMANSLTIDPNFNVSWNFPSNPSFNYLIRLHFCDIVSKSLNDLYFNVYINGKTAISGLDLSTVAGNLAAPYYKDIVVNATLMGPELQVQIGPMGEDTGTKNAILNGVEVLKMSNSVNSLDGEFGVDGRTTGMGKHGMVATAGFVMMFGAFIGLGAMVYKWKKRPQDWQKRNSFSSWLLPIHAGDSTFMTSKGGSQKSNFYNSTLGLGRYFSLSELQEATKNFEASQIIGVGGFGNVYIGTLDDGTKVAVKRGNPQSEQGITEFQTEIQMLSKLRHRHLVSLIGYCDENSEMILVYEFMSNGPFRDHLYGKNLAPLTWKQRLEICIGSARGLHYLHTGTAQGIIHRDVKSTNILLDEALVAKVADFGLSKDVAFGQNHVSTAVKGSFGYLDPEYFRRQQLTDKSDVYSFGVVLLEALCARPAINPQLPREQVNLAEWAMQWKRKGLLEKIIDPHLAGTINPESMKKFAEAAEKCLEDYGVDRPTMGDVLWNLEYALQLQEAFTQGKAEETENAKPDVVTPGSVPVSDPSPITPSVTTNEAATVPVPAKVEENSGTAVDEHSGTAMFTQFANLNGR</sequence>
<protein>
    <recommendedName>
        <fullName>Probable receptor-like protein kinase At4g39110</fullName>
        <ecNumber>2.7.11.-</ecNumber>
    </recommendedName>
</protein>
<dbReference type="EC" id="2.7.11.-"/>
<dbReference type="EMBL" id="AL035679">
    <property type="protein sequence ID" value="CAB38831.1"/>
    <property type="status" value="ALT_INIT"/>
    <property type="molecule type" value="Genomic_DNA"/>
</dbReference>
<dbReference type="EMBL" id="AL050351">
    <property type="protein sequence ID" value="CAB43626.1"/>
    <property type="molecule type" value="Genomic_DNA"/>
</dbReference>
<dbReference type="EMBL" id="AL161594">
    <property type="protein sequence ID" value="CAB80574.1"/>
    <property type="molecule type" value="Genomic_DNA"/>
</dbReference>
<dbReference type="EMBL" id="CP002687">
    <property type="protein sequence ID" value="AEE87020.1"/>
    <property type="molecule type" value="Genomic_DNA"/>
</dbReference>
<dbReference type="PIR" id="T08559">
    <property type="entry name" value="T08559"/>
</dbReference>
<dbReference type="RefSeq" id="NP_195622.1">
    <property type="nucleotide sequence ID" value="NM_120071.2"/>
</dbReference>
<dbReference type="SMR" id="Q9T020"/>
<dbReference type="FunCoup" id="Q9T020">
    <property type="interactions" value="14"/>
</dbReference>
<dbReference type="STRING" id="3702.Q9T020"/>
<dbReference type="GlyGen" id="Q9T020">
    <property type="glycosylation" value="7 sites"/>
</dbReference>
<dbReference type="iPTMnet" id="Q9T020"/>
<dbReference type="PaxDb" id="3702-AT4G39110.1"/>
<dbReference type="ProteomicsDB" id="242848"/>
<dbReference type="EnsemblPlants" id="AT4G39110.1">
    <property type="protein sequence ID" value="AT4G39110.1"/>
    <property type="gene ID" value="AT4G39110"/>
</dbReference>
<dbReference type="GeneID" id="830066"/>
<dbReference type="Gramene" id="AT4G39110.1">
    <property type="protein sequence ID" value="AT4G39110.1"/>
    <property type="gene ID" value="AT4G39110"/>
</dbReference>
<dbReference type="KEGG" id="ath:AT4G39110"/>
<dbReference type="Araport" id="AT4G39110"/>
<dbReference type="TAIR" id="AT4G39110">
    <property type="gene designation" value="BUPS1"/>
</dbReference>
<dbReference type="eggNOG" id="KOG1187">
    <property type="taxonomic scope" value="Eukaryota"/>
</dbReference>
<dbReference type="HOGENOM" id="CLU_000288_42_1_1"/>
<dbReference type="InParanoid" id="Q9T020"/>
<dbReference type="OMA" id="FHWVRLH"/>
<dbReference type="OrthoDB" id="264917at2759"/>
<dbReference type="PhylomeDB" id="Q9T020"/>
<dbReference type="PRO" id="PR:Q9T020"/>
<dbReference type="Proteomes" id="UP000006548">
    <property type="component" value="Chromosome 4"/>
</dbReference>
<dbReference type="ExpressionAtlas" id="Q9T020">
    <property type="expression patterns" value="baseline and differential"/>
</dbReference>
<dbReference type="GO" id="GO:0016324">
    <property type="term" value="C:apical plasma membrane"/>
    <property type="evidence" value="ECO:0000314"/>
    <property type="project" value="TAIR"/>
</dbReference>
<dbReference type="GO" id="GO:0009507">
    <property type="term" value="C:chloroplast"/>
    <property type="evidence" value="ECO:0007005"/>
    <property type="project" value="TAIR"/>
</dbReference>
<dbReference type="GO" id="GO:0005524">
    <property type="term" value="F:ATP binding"/>
    <property type="evidence" value="ECO:0007669"/>
    <property type="project" value="UniProtKB-KW"/>
</dbReference>
<dbReference type="GO" id="GO:0004674">
    <property type="term" value="F:protein serine/threonine kinase activity"/>
    <property type="evidence" value="ECO:0007669"/>
    <property type="project" value="UniProtKB-KW"/>
</dbReference>
<dbReference type="GO" id="GO:0009555">
    <property type="term" value="P:pollen development"/>
    <property type="evidence" value="ECO:0000315"/>
    <property type="project" value="TAIR"/>
</dbReference>
<dbReference type="GO" id="GO:0080092">
    <property type="term" value="P:regulation of pollen tube growth"/>
    <property type="evidence" value="ECO:0000316"/>
    <property type="project" value="TAIR"/>
</dbReference>
<dbReference type="CDD" id="cd14066">
    <property type="entry name" value="STKc_IRAK"/>
    <property type="match status" value="1"/>
</dbReference>
<dbReference type="FunFam" id="2.60.120.430:FF:000005">
    <property type="entry name" value="Putative receptor-like protein kinase"/>
    <property type="match status" value="1"/>
</dbReference>
<dbReference type="FunFam" id="1.10.510.10:FF:000058">
    <property type="entry name" value="Receptor-like protein kinase FERONIA"/>
    <property type="match status" value="1"/>
</dbReference>
<dbReference type="FunFam" id="2.60.120.430:FF:000001">
    <property type="entry name" value="Receptor-like protein kinase FERONIA"/>
    <property type="match status" value="1"/>
</dbReference>
<dbReference type="FunFam" id="3.30.200.20:FF:000039">
    <property type="entry name" value="receptor-like protein kinase FERONIA"/>
    <property type="match status" value="1"/>
</dbReference>
<dbReference type="Gene3D" id="2.60.120.430">
    <property type="entry name" value="Galactose-binding lectin"/>
    <property type="match status" value="2"/>
</dbReference>
<dbReference type="Gene3D" id="3.30.200.20">
    <property type="entry name" value="Phosphorylase Kinase, domain 1"/>
    <property type="match status" value="1"/>
</dbReference>
<dbReference type="Gene3D" id="1.10.510.10">
    <property type="entry name" value="Transferase(Phosphotransferase) domain 1"/>
    <property type="match status" value="1"/>
</dbReference>
<dbReference type="InterPro" id="IPR011009">
    <property type="entry name" value="Kinase-like_dom_sf"/>
</dbReference>
<dbReference type="InterPro" id="IPR024788">
    <property type="entry name" value="Malectin-like_Carb-bd_dom"/>
</dbReference>
<dbReference type="InterPro" id="IPR000719">
    <property type="entry name" value="Prot_kinase_dom"/>
</dbReference>
<dbReference type="InterPro" id="IPR017441">
    <property type="entry name" value="Protein_kinase_ATP_BS"/>
</dbReference>
<dbReference type="InterPro" id="IPR001245">
    <property type="entry name" value="Ser-Thr/Tyr_kinase_cat_dom"/>
</dbReference>
<dbReference type="InterPro" id="IPR008271">
    <property type="entry name" value="Ser/Thr_kinase_AS"/>
</dbReference>
<dbReference type="PANTHER" id="PTHR45631">
    <property type="entry name" value="OS07G0107800 PROTEIN-RELATED"/>
    <property type="match status" value="1"/>
</dbReference>
<dbReference type="Pfam" id="PF12819">
    <property type="entry name" value="Malectin_like"/>
    <property type="match status" value="1"/>
</dbReference>
<dbReference type="Pfam" id="PF07714">
    <property type="entry name" value="PK_Tyr_Ser-Thr"/>
    <property type="match status" value="1"/>
</dbReference>
<dbReference type="SMART" id="SM00220">
    <property type="entry name" value="S_TKc"/>
    <property type="match status" value="1"/>
</dbReference>
<dbReference type="SUPFAM" id="SSF56112">
    <property type="entry name" value="Protein kinase-like (PK-like)"/>
    <property type="match status" value="1"/>
</dbReference>
<dbReference type="PROSITE" id="PS00107">
    <property type="entry name" value="PROTEIN_KINASE_ATP"/>
    <property type="match status" value="1"/>
</dbReference>
<dbReference type="PROSITE" id="PS50011">
    <property type="entry name" value="PROTEIN_KINASE_DOM"/>
    <property type="match status" value="1"/>
</dbReference>
<dbReference type="PROSITE" id="PS00108">
    <property type="entry name" value="PROTEIN_KINASE_ST"/>
    <property type="match status" value="1"/>
</dbReference>
<comment type="subcellular location">
    <subcellularLocation>
        <location evidence="5">Membrane</location>
        <topology evidence="5">Single-pass membrane protein</topology>
    </subcellularLocation>
</comment>
<comment type="similarity">
    <text evidence="2">Belongs to the protein kinase superfamily. Ser/Thr protein kinase family.</text>
</comment>
<comment type="sequence caution" evidence="5">
    <conflict type="erroneous initiation">
        <sequence resource="EMBL-CDS" id="CAB38831"/>
    </conflict>
</comment>
<gene>
    <name type="ordered locus">At4g39110</name>
    <name type="ORF">F19H22.210</name>
    <name type="ORF">T22F8.10</name>
</gene>
<feature type="signal peptide" evidence="1">
    <location>
        <begin position="1"/>
        <end position="43"/>
    </location>
</feature>
<feature type="chain" id="PRO_0000386557" description="Probable receptor-like protein kinase At4g39110">
    <location>
        <begin position="44"/>
        <end position="878"/>
    </location>
</feature>
<feature type="topological domain" description="Extracellular" evidence="1">
    <location>
        <begin position="44"/>
        <end position="440"/>
    </location>
</feature>
<feature type="transmembrane region" description="Helical" evidence="1">
    <location>
        <begin position="441"/>
        <end position="461"/>
    </location>
</feature>
<feature type="topological domain" description="Cytoplasmic" evidence="1">
    <location>
        <begin position="462"/>
        <end position="878"/>
    </location>
</feature>
<feature type="domain" description="Protein kinase" evidence="2">
    <location>
        <begin position="526"/>
        <end position="798"/>
    </location>
</feature>
<feature type="region of interest" description="Disordered" evidence="4">
    <location>
        <begin position="808"/>
        <end position="844"/>
    </location>
</feature>
<feature type="active site" description="Proton acceptor" evidence="2 3">
    <location>
        <position position="650"/>
    </location>
</feature>
<feature type="binding site" evidence="2">
    <location>
        <begin position="532"/>
        <end position="540"/>
    </location>
    <ligand>
        <name>ATP</name>
        <dbReference type="ChEBI" id="CHEBI:30616"/>
    </ligand>
</feature>
<feature type="binding site" evidence="2">
    <location>
        <position position="554"/>
    </location>
    <ligand>
        <name>ATP</name>
        <dbReference type="ChEBI" id="CHEBI:30616"/>
    </ligand>
</feature>
<feature type="glycosylation site" description="N-linked (GlcNAc...) asparagine" evidence="1">
    <location>
        <position position="170"/>
    </location>
</feature>
<feature type="glycosylation site" description="N-linked (GlcNAc...) asparagine" evidence="1">
    <location>
        <position position="183"/>
    </location>
</feature>
<feature type="glycosylation site" description="N-linked (GlcNAc...) asparagine" evidence="1">
    <location>
        <position position="254"/>
    </location>
</feature>
<feature type="glycosylation site" description="N-linked (GlcNAc...) asparagine" evidence="1">
    <location>
        <position position="317"/>
    </location>
</feature>
<feature type="glycosylation site" description="N-linked (GlcNAc...) asparagine" evidence="1">
    <location>
        <position position="382"/>
    </location>
</feature>
<keyword id="KW-0067">ATP-binding</keyword>
<keyword id="KW-0325">Glycoprotein</keyword>
<keyword id="KW-0418">Kinase</keyword>
<keyword id="KW-0472">Membrane</keyword>
<keyword id="KW-0547">Nucleotide-binding</keyword>
<keyword id="KW-1185">Reference proteome</keyword>
<keyword id="KW-0723">Serine/threonine-protein kinase</keyword>
<keyword id="KW-0732">Signal</keyword>
<keyword id="KW-0808">Transferase</keyword>
<keyword id="KW-0812">Transmembrane</keyword>
<keyword id="KW-1133">Transmembrane helix</keyword>
<name>Y4391_ARATH</name>
<proteinExistence type="inferred from homology"/>
<evidence type="ECO:0000255" key="1"/>
<evidence type="ECO:0000255" key="2">
    <source>
        <dbReference type="PROSITE-ProRule" id="PRU00159"/>
    </source>
</evidence>
<evidence type="ECO:0000255" key="3">
    <source>
        <dbReference type="PROSITE-ProRule" id="PRU10027"/>
    </source>
</evidence>
<evidence type="ECO:0000256" key="4">
    <source>
        <dbReference type="SAM" id="MobiDB-lite"/>
    </source>
</evidence>
<evidence type="ECO:0000305" key="5"/>
<accession>Q9T020</accession>
<accession>Q9SVI3</accession>